<organism>
    <name type="scientific">Homo sapiens</name>
    <name type="common">Human</name>
    <dbReference type="NCBI Taxonomy" id="9606"/>
    <lineage>
        <taxon>Eukaryota</taxon>
        <taxon>Metazoa</taxon>
        <taxon>Chordata</taxon>
        <taxon>Craniata</taxon>
        <taxon>Vertebrata</taxon>
        <taxon>Euteleostomi</taxon>
        <taxon>Mammalia</taxon>
        <taxon>Eutheria</taxon>
        <taxon>Euarchontoglires</taxon>
        <taxon>Primates</taxon>
        <taxon>Haplorrhini</taxon>
        <taxon>Catarrhini</taxon>
        <taxon>Hominidae</taxon>
        <taxon>Homo</taxon>
    </lineage>
</organism>
<accession>Q9UBQ5</accession>
<accession>A8K0I9</accession>
<accession>B7ZAM9</accession>
<accession>Q96IQ0</accession>
<accession>Q9Y6D1</accession>
<comment type="function">
    <text evidence="1 7 9 10">Component of the eukaryotic translation initiation factor 3 (eIF-3) complex, which is required for several steps in the initiation of protein synthesis (PubMed:17581632, PubMed:25849773, PubMed:27462815). The eIF-3 complex associates with the 40S ribosome and facilitates the recruitment of eIF-1, eIF-1A, eIF-2:GTP:methionyl-tRNAi and eIF-5 to form the 43S pre-initiation complex (43S PIC). The eIF-3 complex stimulates mRNA recruitment to the 43S PIC and scanning of the mRNA for AUG recognition. The eIF-3 complex is also required for disassembly and recycling of post-termination ribosomal complexes and subsequently prevents premature joining of the 40S and 60S ribosomal subunits prior to initiation (PubMed:17581632). The eIF-3 complex specifically targets and initiates translation of a subset of mRNAs involved in cell proliferation, including cell cycling, differentiation and apoptosis, and uses different modes of RNA stem-loop binding to exert either translational activation or repression (PubMed:25849773).</text>
</comment>
<comment type="subunit">
    <text evidence="1 3 4 5 6 8 9">Component of the eukaryotic translation initiation factor 3 (eIF-3) complex, which is composed of 13 subunits: EIF3A, EIF3B, EIF3C, EIF3D, EIF3E, EIF3F, EIF3G, EIF3H, EIF3I, EIF3J, EIF3K, EIF3L and EIF3M. The eIF-3 complex appears to include 3 stable modules: module A is composed of EIF3A, EIF3B, EIF3G and EIF3I; module B is composed of EIF3F, EIF3H, and EIF3M; and module C is composed of EIF3C, EIF3D, EIF3E, EIF3K and EIF3L. EIF3C of module C binds EIF3B of module A and EIF3H of module B, thereby linking the three modules. EIF3J is a labile subunit that binds to the eIF-3 complex via EIF3B. The eIF-3 complex interacts with RPS6KB1 under conditions of nutrient depletion. Mitogenic stimulation leads to binding and activation of a complex composed of MTOR and RPTOR, leading to phosphorylation and release of RPS6KB1 and binding of EIF4B to eIF-3. Interacts with CCND3, but not with CCND1 and CCND2.</text>
</comment>
<comment type="interaction">
    <interactant intactId="EBI-354344">
        <id>Q9UBQ5</id>
    </interactant>
    <interactant intactId="EBI-395638">
        <id>O14645</id>
        <label>DNALI1</label>
    </interactant>
    <organismsDiffer>false</organismsDiffer>
    <experiments>4</experiments>
</comment>
<comment type="interaction">
    <interactant intactId="EBI-354344">
        <id>Q9UBQ5</id>
    </interactant>
    <interactant intactId="EBI-366696">
        <id>P55884</id>
        <label>EIF3B</label>
    </interactant>
    <organismsDiffer>false</organismsDiffer>
    <experiments>5</experiments>
</comment>
<comment type="interaction">
    <interactant intactId="EBI-354344">
        <id>Q9UBQ5</id>
    </interactant>
    <interactant intactId="EBI-347740">
        <id>P60228</id>
        <label>EIF3E</label>
    </interactant>
    <organismsDiffer>false</organismsDiffer>
    <experiments>9</experiments>
</comment>
<comment type="interaction">
    <interactant intactId="EBI-354344">
        <id>Q9UBQ5</id>
    </interactant>
    <interactant intactId="EBI-373519">
        <id>Q9Y262</id>
        <label>EIF3L</label>
    </interactant>
    <organismsDiffer>false</organismsDiffer>
    <experiments>17</experiments>
</comment>
<comment type="interaction">
    <interactant intactId="EBI-354344">
        <id>Q9UBQ5</id>
    </interactant>
    <interactant intactId="EBI-948266">
        <id>O14901</id>
        <label>KLF11</label>
    </interactant>
    <organismsDiffer>false</organismsDiffer>
    <experiments>3</experiments>
</comment>
<comment type="interaction">
    <interactant intactId="EBI-354344">
        <id>Q9UBQ5</id>
    </interactant>
    <interactant intactId="EBI-6248094">
        <id>Q9Q2G4</id>
        <label>ORF</label>
    </interactant>
    <organismsDiffer>true</organismsDiffer>
    <experiments>5</experiments>
</comment>
<comment type="subcellular location">
    <subcellularLocation>
        <location evidence="1 4">Nucleus</location>
    </subcellularLocation>
    <subcellularLocation>
        <location evidence="1 4">Cytoplasm</location>
    </subcellularLocation>
</comment>
<comment type="alternative products">
    <event type="alternative splicing"/>
    <isoform>
        <id>Q9UBQ5-1</id>
        <name>1</name>
        <sequence type="displayed"/>
    </isoform>
    <isoform>
        <id>Q9UBQ5-2</id>
        <name>2</name>
        <sequence type="described" ref="VSP_055475"/>
    </isoform>
</comment>
<comment type="tissue specificity">
    <text evidence="3">Ubiquitous, with the highest levels of expression in brain, testis and kidney.</text>
</comment>
<comment type="mass spectrometry"/>
<comment type="mass spectrometry"/>
<comment type="similarity">
    <text evidence="1">Belongs to the eIF-3 subunit K family.</text>
</comment>
<evidence type="ECO:0000255" key="1">
    <source>
        <dbReference type="HAMAP-Rule" id="MF_03010"/>
    </source>
</evidence>
<evidence type="ECO:0000255" key="2">
    <source>
        <dbReference type="PROSITE-ProRule" id="PRU01185"/>
    </source>
</evidence>
<evidence type="ECO:0000269" key="3">
    <source>
    </source>
</evidence>
<evidence type="ECO:0000269" key="4">
    <source>
    </source>
</evidence>
<evidence type="ECO:0000269" key="5">
    <source>
    </source>
</evidence>
<evidence type="ECO:0000269" key="6">
    <source>
    </source>
</evidence>
<evidence type="ECO:0000269" key="7">
    <source>
    </source>
</evidence>
<evidence type="ECO:0000269" key="8">
    <source>
    </source>
</evidence>
<evidence type="ECO:0000269" key="9">
    <source>
    </source>
</evidence>
<evidence type="ECO:0000269" key="10">
    <source>
    </source>
</evidence>
<evidence type="ECO:0000269" key="11">
    <source ref="11"/>
</evidence>
<evidence type="ECO:0000303" key="12">
    <source>
    </source>
</evidence>
<evidence type="ECO:0000305" key="13"/>
<evidence type="ECO:0007744" key="14">
    <source>
    </source>
</evidence>
<evidence type="ECO:0007744" key="15">
    <source>
    </source>
</evidence>
<evidence type="ECO:0007744" key="16">
    <source>
    </source>
</evidence>
<evidence type="ECO:0007744" key="17">
    <source>
    </source>
</evidence>
<evidence type="ECO:0007744" key="18">
    <source>
    </source>
</evidence>
<evidence type="ECO:0007744" key="19">
    <source>
    </source>
</evidence>
<evidence type="ECO:0007744" key="20">
    <source>
    </source>
</evidence>
<evidence type="ECO:0007829" key="21">
    <source>
        <dbReference type="PDB" id="1RZ4"/>
    </source>
</evidence>
<evidence type="ECO:0007829" key="22">
    <source>
        <dbReference type="PDB" id="6YBD"/>
    </source>
</evidence>
<evidence type="ECO:0007829" key="23">
    <source>
        <dbReference type="PDB" id="8RG0"/>
    </source>
</evidence>
<sequence>MAMFEQMRANVGKLLKGIDRYNPENLATLERYVETQAKENAYDLEANLAVLKLYQFNPAFFQTTVTAQILLKALTNLPHTDFTLCKCMIDQAHQEERPIRQILYLGDLLETCHFQAFWQALDENMDLLEGITGFEDSVRKFICHVVGITYQHIDRWLLAEMLGDLSDSQLKVWMSKYGWSADESGQIFICSQEESIKPKNIVEKIDFDSVSSIMASSQ</sequence>
<protein>
    <recommendedName>
        <fullName evidence="1">Eukaryotic translation initiation factor 3 subunit K</fullName>
        <shortName evidence="1">eIF3k</shortName>
    </recommendedName>
    <alternativeName>
        <fullName evidence="1">Eukaryotic translation initiation factor 3 subunit 12</fullName>
    </alternativeName>
    <alternativeName>
        <fullName>Muscle-specific gene M9 protein</fullName>
    </alternativeName>
    <alternativeName>
        <fullName>PLAC-24</fullName>
    </alternativeName>
    <alternativeName>
        <fullName evidence="1">eIF-3 p25</fullName>
    </alternativeName>
    <alternativeName>
        <fullName>eIF-3 p28</fullName>
    </alternativeName>
</protein>
<feature type="initiator methionine" description="Removed" evidence="1 6 11 15 18 19">
    <location>
        <position position="1"/>
    </location>
</feature>
<feature type="chain" id="PRO_0000123546" description="Eukaryotic translation initiation factor 3 subunit K">
    <location>
        <begin position="2"/>
        <end position="218"/>
    </location>
</feature>
<feature type="domain" description="PCI" evidence="2">
    <location>
        <begin position="42"/>
        <end position="204"/>
    </location>
</feature>
<feature type="modified residue" description="N-acetylalanine" evidence="1 6 11 15 18 19">
    <location>
        <position position="2"/>
    </location>
</feature>
<feature type="modified residue" description="Phosphothreonine" evidence="20">
    <location>
        <position position="28"/>
    </location>
</feature>
<feature type="modified residue" description="Phosphoserine" evidence="14 16 17">
    <location>
        <position position="217"/>
    </location>
</feature>
<feature type="splice variant" id="VSP_055475" description="In isoform 2." evidence="12">
    <original>VSSIMASSQ</original>
    <variation>EW</variation>
    <location>
        <begin position="210"/>
        <end position="218"/>
    </location>
</feature>
<feature type="sequence conflict" description="In Ref. 6; AAD40193." evidence="13" ref="6">
    <original>Q</original>
    <variation>K</variation>
    <location>
        <position position="119"/>
    </location>
</feature>
<feature type="helix" evidence="21">
    <location>
        <begin position="3"/>
        <end position="16"/>
    </location>
</feature>
<feature type="helix" evidence="21">
    <location>
        <begin position="18"/>
        <end position="21"/>
    </location>
</feature>
<feature type="helix" evidence="21">
    <location>
        <begin position="23"/>
        <end position="25"/>
    </location>
</feature>
<feature type="helix" evidence="21">
    <location>
        <begin position="26"/>
        <end position="39"/>
    </location>
</feature>
<feature type="helix" evidence="21">
    <location>
        <begin position="44"/>
        <end position="56"/>
    </location>
</feature>
<feature type="helix" evidence="21">
    <location>
        <begin position="58"/>
        <end position="60"/>
    </location>
</feature>
<feature type="helix" evidence="21">
    <location>
        <begin position="63"/>
        <end position="75"/>
    </location>
</feature>
<feature type="turn" evidence="21">
    <location>
        <begin position="76"/>
        <end position="78"/>
    </location>
</feature>
<feature type="helix" evidence="21">
    <location>
        <begin position="81"/>
        <end position="87"/>
    </location>
</feature>
<feature type="helix" evidence="21">
    <location>
        <begin position="91"/>
        <end position="94"/>
    </location>
</feature>
<feature type="helix" evidence="21">
    <location>
        <begin position="99"/>
        <end position="110"/>
    </location>
</feature>
<feature type="helix" evidence="21">
    <location>
        <begin position="114"/>
        <end position="120"/>
    </location>
</feature>
<feature type="helix" evidence="21">
    <location>
        <begin position="126"/>
        <end position="129"/>
    </location>
</feature>
<feature type="helix" evidence="21">
    <location>
        <begin position="134"/>
        <end position="149"/>
    </location>
</feature>
<feature type="strand" evidence="21">
    <location>
        <begin position="151"/>
        <end position="153"/>
    </location>
</feature>
<feature type="helix" evidence="21">
    <location>
        <begin position="155"/>
        <end position="161"/>
    </location>
</feature>
<feature type="turn" evidence="23">
    <location>
        <begin position="162"/>
        <end position="164"/>
    </location>
</feature>
<feature type="helix" evidence="21">
    <location>
        <begin position="167"/>
        <end position="177"/>
    </location>
</feature>
<feature type="strand" evidence="22">
    <location>
        <begin position="187"/>
        <end position="190"/>
    </location>
</feature>
<feature type="helix" evidence="21">
    <location>
        <begin position="192"/>
        <end position="195"/>
    </location>
</feature>
<feature type="helix" evidence="21">
    <location>
        <begin position="207"/>
        <end position="214"/>
    </location>
</feature>
<proteinExistence type="evidence at protein level"/>
<dbReference type="EMBL" id="AY245432">
    <property type="protein sequence ID" value="AAP22070.1"/>
    <property type="molecule type" value="mRNA"/>
</dbReference>
<dbReference type="EMBL" id="AB019392">
    <property type="protein sequence ID" value="BAA76626.1"/>
    <property type="molecule type" value="mRNA"/>
</dbReference>
<dbReference type="EMBL" id="AF077051">
    <property type="protein sequence ID" value="AAD27784.1"/>
    <property type="molecule type" value="mRNA"/>
</dbReference>
<dbReference type="EMBL" id="AF109355">
    <property type="protein sequence ID" value="AAQ13503.1"/>
    <property type="molecule type" value="mRNA"/>
</dbReference>
<dbReference type="EMBL" id="AF315506">
    <property type="protein sequence ID" value="AAK01365.1"/>
    <property type="molecule type" value="mRNA"/>
</dbReference>
<dbReference type="EMBL" id="AF085358">
    <property type="protein sequence ID" value="AAD40193.1"/>
    <property type="molecule type" value="mRNA"/>
</dbReference>
<dbReference type="EMBL" id="AK289554">
    <property type="protein sequence ID" value="BAF82243.1"/>
    <property type="molecule type" value="mRNA"/>
</dbReference>
<dbReference type="EMBL" id="AK316344">
    <property type="protein sequence ID" value="BAH14715.1"/>
    <property type="molecule type" value="mRNA"/>
</dbReference>
<dbReference type="EMBL" id="AC008649">
    <property type="status" value="NOT_ANNOTATED_CDS"/>
    <property type="molecule type" value="Genomic_DNA"/>
</dbReference>
<dbReference type="EMBL" id="CH471126">
    <property type="protein sequence ID" value="EAW56807.1"/>
    <property type="molecule type" value="Genomic_DNA"/>
</dbReference>
<dbReference type="EMBL" id="BC001031">
    <property type="protein sequence ID" value="AAH01031.1"/>
    <property type="molecule type" value="mRNA"/>
</dbReference>
<dbReference type="EMBL" id="BC007335">
    <property type="protein sequence ID" value="AAH07335.2"/>
    <property type="molecule type" value="mRNA"/>
</dbReference>
<dbReference type="EMBL" id="BC007559">
    <property type="protein sequence ID" value="AAH07559.1"/>
    <property type="molecule type" value="mRNA"/>
</dbReference>
<dbReference type="CCDS" id="CCDS12517.1">
    <molecule id="Q9UBQ5-1"/>
</dbReference>
<dbReference type="RefSeq" id="NP_037366.1">
    <molecule id="Q9UBQ5-1"/>
    <property type="nucleotide sequence ID" value="NM_013234.4"/>
</dbReference>
<dbReference type="PDB" id="1RZ4">
    <property type="method" value="X-ray"/>
    <property type="resolution" value="2.10 A"/>
    <property type="chains" value="A=1-218"/>
</dbReference>
<dbReference type="PDB" id="3J8B">
    <property type="method" value="EM"/>
    <property type="chains" value="K=1-190"/>
</dbReference>
<dbReference type="PDB" id="3J8C">
    <property type="method" value="EM"/>
    <property type="chains" value="K=1-190"/>
</dbReference>
<dbReference type="PDB" id="6FEC">
    <property type="method" value="EM"/>
    <property type="resolution" value="6.30 A"/>
    <property type="chains" value="6=1-218"/>
</dbReference>
<dbReference type="PDB" id="6YBD">
    <property type="method" value="EM"/>
    <property type="resolution" value="3.30 A"/>
    <property type="chains" value="3=1-218"/>
</dbReference>
<dbReference type="PDB" id="6ZMW">
    <property type="method" value="EM"/>
    <property type="resolution" value="3.70 A"/>
    <property type="chains" value="3=1-218"/>
</dbReference>
<dbReference type="PDB" id="6ZON">
    <property type="method" value="EM"/>
    <property type="resolution" value="3.00 A"/>
    <property type="chains" value="K=1-218"/>
</dbReference>
<dbReference type="PDB" id="6ZP4">
    <property type="method" value="EM"/>
    <property type="resolution" value="2.90 A"/>
    <property type="chains" value="K=1-218"/>
</dbReference>
<dbReference type="PDB" id="6ZVJ">
    <property type="method" value="EM"/>
    <property type="resolution" value="3.80 A"/>
    <property type="chains" value="K=2-218"/>
</dbReference>
<dbReference type="PDB" id="7A09">
    <property type="method" value="EM"/>
    <property type="resolution" value="3.50 A"/>
    <property type="chains" value="K=1-218"/>
</dbReference>
<dbReference type="PDB" id="7QP6">
    <property type="method" value="EM"/>
    <property type="resolution" value="4.70 A"/>
    <property type="chains" value="3=1-218"/>
</dbReference>
<dbReference type="PDB" id="7QP7">
    <property type="method" value="EM"/>
    <property type="resolution" value="3.70 A"/>
    <property type="chains" value="3=1-218"/>
</dbReference>
<dbReference type="PDB" id="8OZ0">
    <property type="method" value="EM"/>
    <property type="resolution" value="3.50 A"/>
    <property type="chains" value="B=1-218"/>
</dbReference>
<dbReference type="PDB" id="8PJ1">
    <property type="method" value="EM"/>
    <property type="resolution" value="3.40 A"/>
    <property type="chains" value="3=1-218"/>
</dbReference>
<dbReference type="PDB" id="8PJ2">
    <property type="method" value="EM"/>
    <property type="resolution" value="3.40 A"/>
    <property type="chains" value="3=1-218"/>
</dbReference>
<dbReference type="PDB" id="8PJ3">
    <property type="method" value="EM"/>
    <property type="resolution" value="3.70 A"/>
    <property type="chains" value="3=1-218"/>
</dbReference>
<dbReference type="PDB" id="8PJ4">
    <property type="method" value="EM"/>
    <property type="resolution" value="3.20 A"/>
    <property type="chains" value="3=1-218"/>
</dbReference>
<dbReference type="PDB" id="8PJ5">
    <property type="method" value="EM"/>
    <property type="resolution" value="2.90 A"/>
    <property type="chains" value="3=1-218"/>
</dbReference>
<dbReference type="PDB" id="8PJ6">
    <property type="method" value="EM"/>
    <property type="resolution" value="2.90 A"/>
    <property type="chains" value="3=1-218"/>
</dbReference>
<dbReference type="PDB" id="8PPL">
    <property type="method" value="EM"/>
    <property type="resolution" value="2.65 A"/>
    <property type="chains" value="I3=1-218"/>
</dbReference>
<dbReference type="PDB" id="8RG0">
    <property type="method" value="EM"/>
    <property type="resolution" value="3.40 A"/>
    <property type="chains" value="3=1-218"/>
</dbReference>
<dbReference type="PDB" id="8XXN">
    <property type="method" value="EM"/>
    <property type="resolution" value="3.60 A"/>
    <property type="chains" value="3K=1-218"/>
</dbReference>
<dbReference type="PDB" id="9BLN">
    <property type="method" value="EM"/>
    <property type="resolution" value="3.90 A"/>
    <property type="chains" value="3=1-218"/>
</dbReference>
<dbReference type="PDBsum" id="1RZ4"/>
<dbReference type="PDBsum" id="3J8B"/>
<dbReference type="PDBsum" id="3J8C"/>
<dbReference type="PDBsum" id="6FEC"/>
<dbReference type="PDBsum" id="6YBD"/>
<dbReference type="PDBsum" id="6ZMW"/>
<dbReference type="PDBsum" id="6ZON"/>
<dbReference type="PDBsum" id="6ZP4"/>
<dbReference type="PDBsum" id="6ZVJ"/>
<dbReference type="PDBsum" id="7A09"/>
<dbReference type="PDBsum" id="7QP6"/>
<dbReference type="PDBsum" id="7QP7"/>
<dbReference type="PDBsum" id="8OZ0"/>
<dbReference type="PDBsum" id="8PJ1"/>
<dbReference type="PDBsum" id="8PJ2"/>
<dbReference type="PDBsum" id="8PJ3"/>
<dbReference type="PDBsum" id="8PJ4"/>
<dbReference type="PDBsum" id="8PJ5"/>
<dbReference type="PDBsum" id="8PJ6"/>
<dbReference type="PDBsum" id="8PPL"/>
<dbReference type="PDBsum" id="8RG0"/>
<dbReference type="PDBsum" id="8XXN"/>
<dbReference type="PDBsum" id="9BLN"/>
<dbReference type="EMDB" id="EMD-10769"/>
<dbReference type="EMDB" id="EMD-11302"/>
<dbReference type="EMDB" id="EMD-11325"/>
<dbReference type="EMDB" id="EMD-11335"/>
<dbReference type="EMDB" id="EMD-11458"/>
<dbReference type="EMDB" id="EMD-11602"/>
<dbReference type="EMDB" id="EMD-14113"/>
<dbReference type="EMDB" id="EMD-14114"/>
<dbReference type="EMDB" id="EMD-17297"/>
<dbReference type="EMDB" id="EMD-17696"/>
<dbReference type="EMDB" id="EMD-17697"/>
<dbReference type="EMDB" id="EMD-17698"/>
<dbReference type="EMDB" id="EMD-17699"/>
<dbReference type="EMDB" id="EMD-17700"/>
<dbReference type="EMDB" id="EMD-17701"/>
<dbReference type="EMDB" id="EMD-17805"/>
<dbReference type="EMDB" id="EMD-19128"/>
<dbReference type="EMDB" id="EMD-38754"/>
<dbReference type="EMDB" id="EMD-4242"/>
<dbReference type="EMDB" id="EMD-44671"/>
<dbReference type="SMR" id="Q9UBQ5"/>
<dbReference type="BioGRID" id="118148">
    <property type="interactions" value="187"/>
</dbReference>
<dbReference type="ComplexPortal" id="CPX-6036">
    <property type="entry name" value="Eukaryotic translation initiation factor 3 complex"/>
</dbReference>
<dbReference type="CORUM" id="Q9UBQ5"/>
<dbReference type="DIP" id="DIP-32880N"/>
<dbReference type="FunCoup" id="Q9UBQ5">
    <property type="interactions" value="2191"/>
</dbReference>
<dbReference type="IntAct" id="Q9UBQ5">
    <property type="interactions" value="103"/>
</dbReference>
<dbReference type="MINT" id="Q9UBQ5"/>
<dbReference type="STRING" id="9606.ENSP00000248342"/>
<dbReference type="GlyGen" id="Q9UBQ5">
    <property type="glycosylation" value="1 site, 1 O-linked glycan (1 site)"/>
</dbReference>
<dbReference type="iPTMnet" id="Q9UBQ5"/>
<dbReference type="PhosphoSitePlus" id="Q9UBQ5"/>
<dbReference type="SwissPalm" id="Q9UBQ5"/>
<dbReference type="BioMuta" id="EIF3K"/>
<dbReference type="DMDM" id="23396628"/>
<dbReference type="jPOST" id="Q9UBQ5"/>
<dbReference type="MassIVE" id="Q9UBQ5"/>
<dbReference type="PaxDb" id="9606-ENSP00000248342"/>
<dbReference type="PeptideAtlas" id="Q9UBQ5"/>
<dbReference type="ProteomicsDB" id="7071"/>
<dbReference type="ProteomicsDB" id="84032">
    <molecule id="Q9UBQ5-1"/>
</dbReference>
<dbReference type="Pumba" id="Q9UBQ5"/>
<dbReference type="TopDownProteomics" id="Q9UBQ5-1">
    <molecule id="Q9UBQ5-1"/>
</dbReference>
<dbReference type="Antibodypedia" id="30132">
    <property type="antibodies" value="241 antibodies from 30 providers"/>
</dbReference>
<dbReference type="DNASU" id="27335"/>
<dbReference type="Ensembl" id="ENST00000248342.9">
    <molecule id="Q9UBQ5-1"/>
    <property type="protein sequence ID" value="ENSP00000248342.3"/>
    <property type="gene ID" value="ENSG00000178982.10"/>
</dbReference>
<dbReference type="Ensembl" id="ENST00000545173.6">
    <molecule id="Q9UBQ5-2"/>
    <property type="protein sequence ID" value="ENSP00000438145.1"/>
    <property type="gene ID" value="ENSG00000178982.10"/>
</dbReference>
<dbReference type="Ensembl" id="ENST00000635417.1">
    <molecule id="Q9UBQ5-2"/>
    <property type="protein sequence ID" value="ENSP00000489379.1"/>
    <property type="gene ID" value="ENSG00000282986.2"/>
</dbReference>
<dbReference type="Ensembl" id="ENST00000635567.2">
    <molecule id="Q9UBQ5-1"/>
    <property type="protein sequence ID" value="ENSP00000489438.1"/>
    <property type="gene ID" value="ENSG00000282986.2"/>
</dbReference>
<dbReference type="GeneID" id="27335"/>
<dbReference type="KEGG" id="hsa:27335"/>
<dbReference type="MANE-Select" id="ENST00000248342.9">
    <property type="protein sequence ID" value="ENSP00000248342.3"/>
    <property type="RefSeq nucleotide sequence ID" value="NM_013234.4"/>
    <property type="RefSeq protein sequence ID" value="NP_037366.1"/>
</dbReference>
<dbReference type="UCSC" id="uc002oiz.2">
    <molecule id="Q9UBQ5-1"/>
    <property type="organism name" value="human"/>
</dbReference>
<dbReference type="AGR" id="HGNC:24656"/>
<dbReference type="CTD" id="27335"/>
<dbReference type="DisGeNET" id="27335"/>
<dbReference type="GeneCards" id="EIF3K"/>
<dbReference type="HGNC" id="HGNC:24656">
    <property type="gene designation" value="EIF3K"/>
</dbReference>
<dbReference type="HPA" id="ENSG00000178982">
    <property type="expression patterns" value="Low tissue specificity"/>
</dbReference>
<dbReference type="MIM" id="609596">
    <property type="type" value="gene"/>
</dbReference>
<dbReference type="neXtProt" id="NX_Q9UBQ5"/>
<dbReference type="OpenTargets" id="ENSG00000178982"/>
<dbReference type="PharmGKB" id="PA162384923"/>
<dbReference type="VEuPathDB" id="HostDB:ENSG00000178982"/>
<dbReference type="eggNOG" id="KOG3252">
    <property type="taxonomic scope" value="Eukaryota"/>
</dbReference>
<dbReference type="GeneTree" id="ENSGT00390000009409"/>
<dbReference type="HOGENOM" id="CLU_076723_1_0_1"/>
<dbReference type="InParanoid" id="Q9UBQ5"/>
<dbReference type="OMA" id="GDDLCAD"/>
<dbReference type="OrthoDB" id="337745at2759"/>
<dbReference type="PAN-GO" id="Q9UBQ5">
    <property type="GO annotations" value="2 GO annotations based on evolutionary models"/>
</dbReference>
<dbReference type="PhylomeDB" id="Q9UBQ5"/>
<dbReference type="TreeFam" id="TF314893"/>
<dbReference type="PathwayCommons" id="Q9UBQ5"/>
<dbReference type="Reactome" id="R-HSA-156827">
    <property type="pathway name" value="L13a-mediated translational silencing of Ceruloplasmin expression"/>
</dbReference>
<dbReference type="Reactome" id="R-HSA-72649">
    <property type="pathway name" value="Translation initiation complex formation"/>
</dbReference>
<dbReference type="Reactome" id="R-HSA-72689">
    <property type="pathway name" value="Formation of a pool of free 40S subunits"/>
</dbReference>
<dbReference type="Reactome" id="R-HSA-72695">
    <property type="pathway name" value="Formation of the ternary complex, and subsequently, the 43S complex"/>
</dbReference>
<dbReference type="Reactome" id="R-HSA-72702">
    <property type="pathway name" value="Ribosomal scanning and start codon recognition"/>
</dbReference>
<dbReference type="Reactome" id="R-HSA-72706">
    <property type="pathway name" value="GTP hydrolysis and joining of the 60S ribosomal subunit"/>
</dbReference>
<dbReference type="SignaLink" id="Q9UBQ5"/>
<dbReference type="SIGNOR" id="Q9UBQ5"/>
<dbReference type="BioGRID-ORCS" id="27335">
    <property type="hits" value="140 hits in 1177 CRISPR screens"/>
</dbReference>
<dbReference type="CD-CODE" id="91857CE7">
    <property type="entry name" value="Nucleolus"/>
</dbReference>
<dbReference type="CD-CODE" id="DEE660B4">
    <property type="entry name" value="Stress granule"/>
</dbReference>
<dbReference type="ChiTaRS" id="EIF3K">
    <property type="organism name" value="human"/>
</dbReference>
<dbReference type="EvolutionaryTrace" id="Q9UBQ5"/>
<dbReference type="GeneWiki" id="EIF3K"/>
<dbReference type="GenomeRNAi" id="27335"/>
<dbReference type="Pharos" id="Q9UBQ5">
    <property type="development level" value="Tbio"/>
</dbReference>
<dbReference type="PRO" id="PR:Q9UBQ5"/>
<dbReference type="Proteomes" id="UP000005640">
    <property type="component" value="Chromosome 19"/>
</dbReference>
<dbReference type="RNAct" id="Q9UBQ5">
    <property type="molecule type" value="protein"/>
</dbReference>
<dbReference type="Bgee" id="ENSG00000178982">
    <property type="expression patterns" value="Expressed in apex of heart and 153 other cell types or tissues"/>
</dbReference>
<dbReference type="ExpressionAtlas" id="Q9UBQ5">
    <property type="expression patterns" value="baseline and differential"/>
</dbReference>
<dbReference type="GO" id="GO:0005829">
    <property type="term" value="C:cytosol"/>
    <property type="evidence" value="ECO:0000314"/>
    <property type="project" value="HPA"/>
</dbReference>
<dbReference type="GO" id="GO:0016282">
    <property type="term" value="C:eukaryotic 43S preinitiation complex"/>
    <property type="evidence" value="ECO:0007669"/>
    <property type="project" value="UniProtKB-UniRule"/>
</dbReference>
<dbReference type="GO" id="GO:0033290">
    <property type="term" value="C:eukaryotic 48S preinitiation complex"/>
    <property type="evidence" value="ECO:0007669"/>
    <property type="project" value="UniProtKB-UniRule"/>
</dbReference>
<dbReference type="GO" id="GO:0005852">
    <property type="term" value="C:eukaryotic translation initiation factor 3 complex"/>
    <property type="evidence" value="ECO:0000314"/>
    <property type="project" value="UniProtKB"/>
</dbReference>
<dbReference type="GO" id="GO:0016020">
    <property type="term" value="C:membrane"/>
    <property type="evidence" value="ECO:0007005"/>
    <property type="project" value="UniProtKB"/>
</dbReference>
<dbReference type="GO" id="GO:0005634">
    <property type="term" value="C:nucleus"/>
    <property type="evidence" value="ECO:0007669"/>
    <property type="project" value="UniProtKB-SubCell"/>
</dbReference>
<dbReference type="GO" id="GO:0043022">
    <property type="term" value="F:ribosome binding"/>
    <property type="evidence" value="ECO:0007669"/>
    <property type="project" value="InterPro"/>
</dbReference>
<dbReference type="GO" id="GO:0003723">
    <property type="term" value="F:RNA binding"/>
    <property type="evidence" value="ECO:0007669"/>
    <property type="project" value="UniProtKB-UniRule"/>
</dbReference>
<dbReference type="GO" id="GO:0003743">
    <property type="term" value="F:translation initiation factor activity"/>
    <property type="evidence" value="ECO:0007669"/>
    <property type="project" value="UniProtKB-UniRule"/>
</dbReference>
<dbReference type="GO" id="GO:0001732">
    <property type="term" value="P:formation of cytoplasmic translation initiation complex"/>
    <property type="evidence" value="ECO:0000303"/>
    <property type="project" value="ComplexPortal"/>
</dbReference>
<dbReference type="GO" id="GO:0006446">
    <property type="term" value="P:regulation of translational initiation"/>
    <property type="evidence" value="ECO:0007669"/>
    <property type="project" value="InterPro"/>
</dbReference>
<dbReference type="GO" id="GO:0006413">
    <property type="term" value="P:translational initiation"/>
    <property type="evidence" value="ECO:0000314"/>
    <property type="project" value="UniProtKB"/>
</dbReference>
<dbReference type="FunFam" id="1.10.10.10:FF:000212">
    <property type="entry name" value="Eukaryotic translation initiation factor 3 subunit K"/>
    <property type="match status" value="1"/>
</dbReference>
<dbReference type="FunFam" id="1.25.40.250:FF:000001">
    <property type="entry name" value="Eukaryotic translation initiation factor 3 subunit K"/>
    <property type="match status" value="1"/>
</dbReference>
<dbReference type="Gene3D" id="1.25.40.250">
    <property type="entry name" value="ARM repeat, domain 1"/>
    <property type="match status" value="1"/>
</dbReference>
<dbReference type="Gene3D" id="1.10.10.10">
    <property type="entry name" value="Winged helix-like DNA-binding domain superfamily/Winged helix DNA-binding domain"/>
    <property type="match status" value="1"/>
</dbReference>
<dbReference type="HAMAP" id="MF_03010">
    <property type="entry name" value="eIF3k"/>
    <property type="match status" value="1"/>
</dbReference>
<dbReference type="InterPro" id="IPR016024">
    <property type="entry name" value="ARM-type_fold"/>
</dbReference>
<dbReference type="InterPro" id="IPR033464">
    <property type="entry name" value="CSN8_PSD8_EIF3K"/>
</dbReference>
<dbReference type="InterPro" id="IPR009374">
    <property type="entry name" value="eIF3k"/>
</dbReference>
<dbReference type="InterPro" id="IPR000717">
    <property type="entry name" value="PCI_dom"/>
</dbReference>
<dbReference type="InterPro" id="IPR016020">
    <property type="entry name" value="Transl_init_fac_sub12_N_euk"/>
</dbReference>
<dbReference type="InterPro" id="IPR036388">
    <property type="entry name" value="WH-like_DNA-bd_sf"/>
</dbReference>
<dbReference type="InterPro" id="IPR036390">
    <property type="entry name" value="WH_DNA-bd_sf"/>
</dbReference>
<dbReference type="PANTHER" id="PTHR13022">
    <property type="entry name" value="EUKARYOTIC TRANSLATION INITIATION FACTOR 3 SUBUNIT 11"/>
    <property type="match status" value="1"/>
</dbReference>
<dbReference type="PANTHER" id="PTHR13022:SF0">
    <property type="entry name" value="EUKARYOTIC TRANSLATION INITIATION FACTOR 3 SUBUNIT K"/>
    <property type="match status" value="1"/>
</dbReference>
<dbReference type="Pfam" id="PF10075">
    <property type="entry name" value="CSN8_PSD8_EIF3K"/>
    <property type="match status" value="1"/>
</dbReference>
<dbReference type="SUPFAM" id="SSF48371">
    <property type="entry name" value="ARM repeat"/>
    <property type="match status" value="1"/>
</dbReference>
<dbReference type="SUPFAM" id="SSF46785">
    <property type="entry name" value="Winged helix' DNA-binding domain"/>
    <property type="match status" value="1"/>
</dbReference>
<dbReference type="PROSITE" id="PS50250">
    <property type="entry name" value="PCI"/>
    <property type="match status" value="1"/>
</dbReference>
<keyword id="KW-0002">3D-structure</keyword>
<keyword id="KW-0007">Acetylation</keyword>
<keyword id="KW-0025">Alternative splicing</keyword>
<keyword id="KW-0963">Cytoplasm</keyword>
<keyword id="KW-0903">Direct protein sequencing</keyword>
<keyword id="KW-0396">Initiation factor</keyword>
<keyword id="KW-0539">Nucleus</keyword>
<keyword id="KW-0597">Phosphoprotein</keyword>
<keyword id="KW-0648">Protein biosynthesis</keyword>
<keyword id="KW-1267">Proteomics identification</keyword>
<keyword id="KW-1185">Reference proteome</keyword>
<gene>
    <name evidence="1" type="primary">EIF3K</name>
    <name evidence="1" type="synonym">EIF3S12</name>
    <name type="ORF">ARG134</name>
    <name type="ORF">HSPC029</name>
    <name type="ORF">MSTP001</name>
    <name type="ORF">PTD001</name>
</gene>
<name>EIF3K_HUMAN</name>
<reference key="1">
    <citation type="journal article" date="2003" name="Eur. J. Biochem.">
        <title>Characterization of eIF3k: a newly discovered subunit of mammalian translation initiation factor eIF3.</title>
        <authorList>
            <person name="Mayeur G.L."/>
            <person name="Fraser C.S."/>
            <person name="Peiretti F."/>
            <person name="Block K.L."/>
            <person name="Hershey J.W.B."/>
        </authorList>
    </citation>
    <scope>NUCLEOTIDE SEQUENCE [MRNA] (ISOFORM 1)</scope>
    <scope>PROTEIN SEQUENCE OF 21-31</scope>
    <scope>IDENTIFICATION IN THE EIF-3 COMPLEX</scope>
    <scope>INTERACTION WITH EIF3B; EIF3C; EIF3G AND EIF3J</scope>
    <scope>TISSUE SPECIFICITY</scope>
    <scope>BLOCKAGE OF N-TERMINUS</scope>
    <source>
        <tissue>Cervix carcinoma</tissue>
    </source>
</reference>
<reference key="2">
    <citation type="submission" date="1998-10" db="EMBL/GenBank/DDBJ databases">
        <title>Muscle specific gene M9.</title>
        <authorList>
            <person name="Nawa G."/>
            <person name="Miyoshi Y."/>
            <person name="Nakamura Y."/>
        </authorList>
    </citation>
    <scope>NUCLEOTIDE SEQUENCE [MRNA] (ISOFORM 1)</scope>
    <source>
        <tissue>Skeletal muscle</tissue>
    </source>
</reference>
<reference key="3">
    <citation type="submission" date="1998-07" db="EMBL/GenBank/DDBJ databases">
        <authorList>
            <person name="Ye M."/>
            <person name="Song H."/>
            <person name="Peng Y."/>
            <person name="Huang Q."/>
            <person name="Dai M."/>
            <person name="Mao Y."/>
            <person name="Zhu H."/>
            <person name="Li G."/>
            <person name="Luo M."/>
            <person name="Hu R."/>
            <person name="Chen J."/>
        </authorList>
    </citation>
    <scope>NUCLEOTIDE SEQUENCE [LARGE SCALE MRNA] (ISOFORM 1)</scope>
    <source>
        <tissue>Pituitary tumor</tissue>
    </source>
</reference>
<reference key="4">
    <citation type="submission" date="1998-11" db="EMBL/GenBank/DDBJ databases">
        <authorList>
            <person name="Hui R.T."/>
            <person name="Liu Y.Q."/>
            <person name="Liu B."/>
            <person name="Zhao B."/>
            <person name="Meng X.M."/>
            <person name="Sheng H."/>
            <person name="Xu Y.Y."/>
            <person name="Wang X.Y."/>
            <person name="Ye J."/>
            <person name="Song L."/>
            <person name="Gao Y."/>
            <person name="Wei Y.J."/>
            <person name="Zhang C.L."/>
            <person name="Zhang J."/>
            <person name="Chai M.Q."/>
            <person name="Chen J.Z."/>
            <person name="Sun Y.H."/>
            <person name="Zhou X.L."/>
            <person name="Jiang Y.X."/>
            <person name="Zhao X.W."/>
            <person name="Liu S."/>
            <person name="Cao H.Q."/>
            <person name="Zhao Y."/>
            <person name="Liu D.Q."/>
            <person name="Ding J.F."/>
            <person name="Liu L.S."/>
            <person name="Gao R.L."/>
            <person name="Wu Q.Y."/>
            <person name="Qiang B.Q."/>
            <person name="Yuan J.G."/>
            <person name="Liew C.C."/>
            <person name="Zhao M.S."/>
        </authorList>
    </citation>
    <scope>NUCLEOTIDE SEQUENCE [LARGE SCALE MRNA] (ISOFORM 1)</scope>
    <source>
        <tissue>Aorta</tissue>
    </source>
</reference>
<reference key="5">
    <citation type="submission" date="2000-10" db="EMBL/GenBank/DDBJ databases">
        <title>Gene cloning of human adenocarcinoma cell line.</title>
        <authorList>
            <person name="Yanqiu Z."/>
            <person name="Huazhang A."/>
            <person name="Fei L."/>
            <person name="Baojun C."/>
            <person name="Taidong Q."/>
            <person name="Kaichun W."/>
            <person name="Jie D."/>
            <person name="Daiming F."/>
        </authorList>
    </citation>
    <scope>NUCLEOTIDE SEQUENCE [MRNA] (ISOFORM 1)</scope>
    <source>
        <tissue>Stomach cancer</tissue>
    </source>
</reference>
<reference key="6">
    <citation type="journal article" date="2000" name="Genome Res.">
        <title>Cloning and functional analysis of cDNAs with open reading frames for 300 previously undefined genes expressed in CD34+ hematopoietic stem/progenitor cells.</title>
        <authorList>
            <person name="Zhang Q.-H."/>
            <person name="Ye M."/>
            <person name="Wu X.-Y."/>
            <person name="Ren S.-X."/>
            <person name="Zhao M."/>
            <person name="Zhao C.-J."/>
            <person name="Fu G."/>
            <person name="Shen Y."/>
            <person name="Fan H.-Y."/>
            <person name="Lu G."/>
            <person name="Zhong M."/>
            <person name="Xu X.-R."/>
            <person name="Han Z.-G."/>
            <person name="Zhang J.-W."/>
            <person name="Tao J."/>
            <person name="Huang Q.-H."/>
            <person name="Zhou J."/>
            <person name="Hu G.-X."/>
            <person name="Gu J."/>
            <person name="Chen S.-J."/>
            <person name="Chen Z."/>
        </authorList>
    </citation>
    <scope>NUCLEOTIDE SEQUENCE [LARGE SCALE MRNA] (ISOFORM 1)</scope>
    <source>
        <tissue>Umbilical cord blood</tissue>
    </source>
</reference>
<reference key="7">
    <citation type="journal article" date="2004" name="Nat. Genet.">
        <title>Complete sequencing and characterization of 21,243 full-length human cDNAs.</title>
        <authorList>
            <person name="Ota T."/>
            <person name="Suzuki Y."/>
            <person name="Nishikawa T."/>
            <person name="Otsuki T."/>
            <person name="Sugiyama T."/>
            <person name="Irie R."/>
            <person name="Wakamatsu A."/>
            <person name="Hayashi K."/>
            <person name="Sato H."/>
            <person name="Nagai K."/>
            <person name="Kimura K."/>
            <person name="Makita H."/>
            <person name="Sekine M."/>
            <person name="Obayashi M."/>
            <person name="Nishi T."/>
            <person name="Shibahara T."/>
            <person name="Tanaka T."/>
            <person name="Ishii S."/>
            <person name="Yamamoto J."/>
            <person name="Saito K."/>
            <person name="Kawai Y."/>
            <person name="Isono Y."/>
            <person name="Nakamura Y."/>
            <person name="Nagahari K."/>
            <person name="Murakami K."/>
            <person name="Yasuda T."/>
            <person name="Iwayanagi T."/>
            <person name="Wagatsuma M."/>
            <person name="Shiratori A."/>
            <person name="Sudo H."/>
            <person name="Hosoiri T."/>
            <person name="Kaku Y."/>
            <person name="Kodaira H."/>
            <person name="Kondo H."/>
            <person name="Sugawara M."/>
            <person name="Takahashi M."/>
            <person name="Kanda K."/>
            <person name="Yokoi T."/>
            <person name="Furuya T."/>
            <person name="Kikkawa E."/>
            <person name="Omura Y."/>
            <person name="Abe K."/>
            <person name="Kamihara K."/>
            <person name="Katsuta N."/>
            <person name="Sato K."/>
            <person name="Tanikawa M."/>
            <person name="Yamazaki M."/>
            <person name="Ninomiya K."/>
            <person name="Ishibashi T."/>
            <person name="Yamashita H."/>
            <person name="Murakawa K."/>
            <person name="Fujimori K."/>
            <person name="Tanai H."/>
            <person name="Kimata M."/>
            <person name="Watanabe M."/>
            <person name="Hiraoka S."/>
            <person name="Chiba Y."/>
            <person name="Ishida S."/>
            <person name="Ono Y."/>
            <person name="Takiguchi S."/>
            <person name="Watanabe S."/>
            <person name="Yosida M."/>
            <person name="Hotuta T."/>
            <person name="Kusano J."/>
            <person name="Kanehori K."/>
            <person name="Takahashi-Fujii A."/>
            <person name="Hara H."/>
            <person name="Tanase T.-O."/>
            <person name="Nomura Y."/>
            <person name="Togiya S."/>
            <person name="Komai F."/>
            <person name="Hara R."/>
            <person name="Takeuchi K."/>
            <person name="Arita M."/>
            <person name="Imose N."/>
            <person name="Musashino K."/>
            <person name="Yuuki H."/>
            <person name="Oshima A."/>
            <person name="Sasaki N."/>
            <person name="Aotsuka S."/>
            <person name="Yoshikawa Y."/>
            <person name="Matsunawa H."/>
            <person name="Ichihara T."/>
            <person name="Shiohata N."/>
            <person name="Sano S."/>
            <person name="Moriya S."/>
            <person name="Momiyama H."/>
            <person name="Satoh N."/>
            <person name="Takami S."/>
            <person name="Terashima Y."/>
            <person name="Suzuki O."/>
            <person name="Nakagawa S."/>
            <person name="Senoh A."/>
            <person name="Mizoguchi H."/>
            <person name="Goto Y."/>
            <person name="Shimizu F."/>
            <person name="Wakebe H."/>
            <person name="Hishigaki H."/>
            <person name="Watanabe T."/>
            <person name="Sugiyama A."/>
            <person name="Takemoto M."/>
            <person name="Kawakami B."/>
            <person name="Yamazaki M."/>
            <person name="Watanabe K."/>
            <person name="Kumagai A."/>
            <person name="Itakura S."/>
            <person name="Fukuzumi Y."/>
            <person name="Fujimori Y."/>
            <person name="Komiyama M."/>
            <person name="Tashiro H."/>
            <person name="Tanigami A."/>
            <person name="Fujiwara T."/>
            <person name="Ono T."/>
            <person name="Yamada K."/>
            <person name="Fujii Y."/>
            <person name="Ozaki K."/>
            <person name="Hirao M."/>
            <person name="Ohmori Y."/>
            <person name="Kawabata A."/>
            <person name="Hikiji T."/>
            <person name="Kobatake N."/>
            <person name="Inagaki H."/>
            <person name="Ikema Y."/>
            <person name="Okamoto S."/>
            <person name="Okitani R."/>
            <person name="Kawakami T."/>
            <person name="Noguchi S."/>
            <person name="Itoh T."/>
            <person name="Shigeta K."/>
            <person name="Senba T."/>
            <person name="Matsumura K."/>
            <person name="Nakajima Y."/>
            <person name="Mizuno T."/>
            <person name="Morinaga M."/>
            <person name="Sasaki M."/>
            <person name="Togashi T."/>
            <person name="Oyama M."/>
            <person name="Hata H."/>
            <person name="Watanabe M."/>
            <person name="Komatsu T."/>
            <person name="Mizushima-Sugano J."/>
            <person name="Satoh T."/>
            <person name="Shirai Y."/>
            <person name="Takahashi Y."/>
            <person name="Nakagawa K."/>
            <person name="Okumura K."/>
            <person name="Nagase T."/>
            <person name="Nomura N."/>
            <person name="Kikuchi H."/>
            <person name="Masuho Y."/>
            <person name="Yamashita R."/>
            <person name="Nakai K."/>
            <person name="Yada T."/>
            <person name="Nakamura Y."/>
            <person name="Ohara O."/>
            <person name="Isogai T."/>
            <person name="Sugano S."/>
        </authorList>
    </citation>
    <scope>NUCLEOTIDE SEQUENCE [LARGE SCALE MRNA] (ISOFORMS 1 AND 2)</scope>
    <source>
        <tissue>Cerebellum</tissue>
        <tissue>Spleen</tissue>
    </source>
</reference>
<reference key="8">
    <citation type="journal article" date="2004" name="Nature">
        <title>The DNA sequence and biology of human chromosome 19.</title>
        <authorList>
            <person name="Grimwood J."/>
            <person name="Gordon L.A."/>
            <person name="Olsen A.S."/>
            <person name="Terry A."/>
            <person name="Schmutz J."/>
            <person name="Lamerdin J.E."/>
            <person name="Hellsten U."/>
            <person name="Goodstein D."/>
            <person name="Couronne O."/>
            <person name="Tran-Gyamfi M."/>
            <person name="Aerts A."/>
            <person name="Altherr M."/>
            <person name="Ashworth L."/>
            <person name="Bajorek E."/>
            <person name="Black S."/>
            <person name="Branscomb E."/>
            <person name="Caenepeel S."/>
            <person name="Carrano A.V."/>
            <person name="Caoile C."/>
            <person name="Chan Y.M."/>
            <person name="Christensen M."/>
            <person name="Cleland C.A."/>
            <person name="Copeland A."/>
            <person name="Dalin E."/>
            <person name="Dehal P."/>
            <person name="Denys M."/>
            <person name="Detter J.C."/>
            <person name="Escobar J."/>
            <person name="Flowers D."/>
            <person name="Fotopulos D."/>
            <person name="Garcia C."/>
            <person name="Georgescu A.M."/>
            <person name="Glavina T."/>
            <person name="Gomez M."/>
            <person name="Gonzales E."/>
            <person name="Groza M."/>
            <person name="Hammon N."/>
            <person name="Hawkins T."/>
            <person name="Haydu L."/>
            <person name="Ho I."/>
            <person name="Huang W."/>
            <person name="Israni S."/>
            <person name="Jett J."/>
            <person name="Kadner K."/>
            <person name="Kimball H."/>
            <person name="Kobayashi A."/>
            <person name="Larionov V."/>
            <person name="Leem S.-H."/>
            <person name="Lopez F."/>
            <person name="Lou Y."/>
            <person name="Lowry S."/>
            <person name="Malfatti S."/>
            <person name="Martinez D."/>
            <person name="McCready P.M."/>
            <person name="Medina C."/>
            <person name="Morgan J."/>
            <person name="Nelson K."/>
            <person name="Nolan M."/>
            <person name="Ovcharenko I."/>
            <person name="Pitluck S."/>
            <person name="Pollard M."/>
            <person name="Popkie A.P."/>
            <person name="Predki P."/>
            <person name="Quan G."/>
            <person name="Ramirez L."/>
            <person name="Rash S."/>
            <person name="Retterer J."/>
            <person name="Rodriguez A."/>
            <person name="Rogers S."/>
            <person name="Salamov A."/>
            <person name="Salazar A."/>
            <person name="She X."/>
            <person name="Smith D."/>
            <person name="Slezak T."/>
            <person name="Solovyev V."/>
            <person name="Thayer N."/>
            <person name="Tice H."/>
            <person name="Tsai M."/>
            <person name="Ustaszewska A."/>
            <person name="Vo N."/>
            <person name="Wagner M."/>
            <person name="Wheeler J."/>
            <person name="Wu K."/>
            <person name="Xie G."/>
            <person name="Yang J."/>
            <person name="Dubchak I."/>
            <person name="Furey T.S."/>
            <person name="DeJong P."/>
            <person name="Dickson M."/>
            <person name="Gordon D."/>
            <person name="Eichler E.E."/>
            <person name="Pennacchio L.A."/>
            <person name="Richardson P."/>
            <person name="Stubbs L."/>
            <person name="Rokhsar D.S."/>
            <person name="Myers R.M."/>
            <person name="Rubin E.M."/>
            <person name="Lucas S.M."/>
        </authorList>
    </citation>
    <scope>NUCLEOTIDE SEQUENCE [LARGE SCALE GENOMIC DNA]</scope>
</reference>
<reference key="9">
    <citation type="submission" date="2005-07" db="EMBL/GenBank/DDBJ databases">
        <authorList>
            <person name="Mural R.J."/>
            <person name="Istrail S."/>
            <person name="Sutton G.G."/>
            <person name="Florea L."/>
            <person name="Halpern A.L."/>
            <person name="Mobarry C.M."/>
            <person name="Lippert R."/>
            <person name="Walenz B."/>
            <person name="Shatkay H."/>
            <person name="Dew I."/>
            <person name="Miller J.R."/>
            <person name="Flanigan M.J."/>
            <person name="Edwards N.J."/>
            <person name="Bolanos R."/>
            <person name="Fasulo D."/>
            <person name="Halldorsson B.V."/>
            <person name="Hannenhalli S."/>
            <person name="Turner R."/>
            <person name="Yooseph S."/>
            <person name="Lu F."/>
            <person name="Nusskern D.R."/>
            <person name="Shue B.C."/>
            <person name="Zheng X.H."/>
            <person name="Zhong F."/>
            <person name="Delcher A.L."/>
            <person name="Huson D.H."/>
            <person name="Kravitz S.A."/>
            <person name="Mouchard L."/>
            <person name="Reinert K."/>
            <person name="Remington K.A."/>
            <person name="Clark A.G."/>
            <person name="Waterman M.S."/>
            <person name="Eichler E.E."/>
            <person name="Adams M.D."/>
            <person name="Hunkapiller M.W."/>
            <person name="Myers E.W."/>
            <person name="Venter J.C."/>
        </authorList>
    </citation>
    <scope>NUCLEOTIDE SEQUENCE [LARGE SCALE GENOMIC DNA]</scope>
</reference>
<reference key="10">
    <citation type="journal article" date="2004" name="Genome Res.">
        <title>The status, quality, and expansion of the NIH full-length cDNA project: the Mammalian Gene Collection (MGC).</title>
        <authorList>
            <consortium name="The MGC Project Team"/>
        </authorList>
    </citation>
    <scope>NUCLEOTIDE SEQUENCE [LARGE SCALE MRNA] (ISOFORM 1)</scope>
    <source>
        <tissue>Placenta</tissue>
        <tissue>Skin</tissue>
        <tissue>Uterus</tissue>
    </source>
</reference>
<reference key="11">
    <citation type="submission" date="2008-12" db="UniProtKB">
        <authorList>
            <person name="Bienvenut W.V."/>
            <person name="Zebisch A."/>
            <person name="Kolch W."/>
        </authorList>
    </citation>
    <scope>PROTEIN SEQUENCE OF 2-8; 21-31 AND 39-52</scope>
    <scope>CLEAVAGE OF INITIATOR METHIONINE</scope>
    <scope>ACETYLATION AT ALA-2</scope>
    <scope>IDENTIFICATION BY MASS SPECTROMETRY</scope>
    <source>
        <tissue>Colon carcinoma</tissue>
    </source>
</reference>
<reference key="12">
    <citation type="journal article" date="2004" name="FEBS Lett.">
        <title>Identification of the p28 subunit of eukaryotic initiation factor 3(eIF3k) as a new interaction partner of cyclin D3.</title>
        <authorList>
            <person name="Shen X."/>
            <person name="Yang Y."/>
            <person name="Liu W."/>
            <person name="Sun M."/>
            <person name="Jiang J."/>
            <person name="Zong H."/>
            <person name="Gu J."/>
        </authorList>
    </citation>
    <scope>INTERACTION WITH CCND3</scope>
    <scope>SUBCELLULAR LOCATION</scope>
</reference>
<reference key="13">
    <citation type="journal article" date="2005" name="RNA">
        <title>Binding of eukaryotic initiation factor 3 to ribosomal 40S subunits and its role in ribosomal dissociation and anti-association.</title>
        <authorList>
            <person name="Kolupaeva V.G."/>
            <person name="Unbehaun A."/>
            <person name="Lomakin I.B."/>
            <person name="Hellen C.U.T."/>
            <person name="Pestova T.V."/>
        </authorList>
    </citation>
    <scope>CHARACTERIZATION OF THE EIF-3 COMPLEX</scope>
</reference>
<reference key="14">
    <citation type="journal article" date="2006" name="Cell">
        <title>Global, in vivo, and site-specific phosphorylation dynamics in signaling networks.</title>
        <authorList>
            <person name="Olsen J.V."/>
            <person name="Blagoev B."/>
            <person name="Gnad F."/>
            <person name="Macek B."/>
            <person name="Kumar C."/>
            <person name="Mortensen P."/>
            <person name="Mann M."/>
        </authorList>
    </citation>
    <scope>IDENTIFICATION BY MASS SPECTROMETRY [LARGE SCALE ANALYSIS]</scope>
    <source>
        <tissue>Cervix carcinoma</tissue>
    </source>
</reference>
<reference key="15">
    <citation type="journal article" date="2006" name="J. Biol. Chem.">
        <title>Translation initiation factor eIF4G-1 binds to eIF3 through the eIF3e subunit.</title>
        <authorList>
            <person name="LeFebvre A.K."/>
            <person name="Korneeva N.L."/>
            <person name="Trutschl M."/>
            <person name="Cvek U."/>
            <person name="Duzan R.D."/>
            <person name="Bradley C.A."/>
            <person name="Hershey J.W.B."/>
            <person name="Rhoads R.E."/>
        </authorList>
    </citation>
    <scope>IDENTIFICATION IN THE EIF-3 COMPLEX</scope>
    <scope>IDENTIFICATION BY MASS SPECTROMETRY</scope>
</reference>
<reference key="16">
    <citation type="journal article" date="2007" name="EMBO J.">
        <title>Reconstitution reveals the functional core of mammalian eIF3.</title>
        <authorList>
            <person name="Masutani M."/>
            <person name="Sonenberg N."/>
            <person name="Yokoyama S."/>
            <person name="Imataka H."/>
        </authorList>
    </citation>
    <scope>FUNCTION</scope>
    <scope>CHARACTERIZATION OF THE EIF-3 COMPLEX</scope>
</reference>
<reference key="17">
    <citation type="journal article" date="2007" name="Mol. Cell. Proteomics">
        <title>Structural characterization of the human eukaryotic initiation factor 3 protein complex by mass spectrometry.</title>
        <authorList>
            <person name="Damoc E."/>
            <person name="Fraser C.S."/>
            <person name="Zhou M."/>
            <person name="Videler H."/>
            <person name="Mayeur G.L."/>
            <person name="Hershey J.W.B."/>
            <person name="Doudna J.A."/>
            <person name="Robinson C.V."/>
            <person name="Leary J.A."/>
        </authorList>
    </citation>
    <scope>IDENTIFICATION IN THE EIF-3 COMPLEX</scope>
    <scope>CHARACTERIZATION OF THE EIF-3 COMPLEX</scope>
    <scope>CLEAVAGE OF INITIATOR METHIONINE</scope>
    <scope>ACETYLATION AT ALA-2</scope>
    <scope>MASS SPECTROMETRY</scope>
</reference>
<reference key="18">
    <citation type="journal article" date="2008" name="Proc. Natl. Acad. Sci. U.S.A.">
        <title>A quantitative atlas of mitotic phosphorylation.</title>
        <authorList>
            <person name="Dephoure N."/>
            <person name="Zhou C."/>
            <person name="Villen J."/>
            <person name="Beausoleil S.A."/>
            <person name="Bakalarski C.E."/>
            <person name="Elledge S.J."/>
            <person name="Gygi S.P."/>
        </authorList>
    </citation>
    <scope>PHOSPHORYLATION [LARGE SCALE ANALYSIS] AT SER-217</scope>
    <scope>IDENTIFICATION BY MASS SPECTROMETRY [LARGE SCALE ANALYSIS]</scope>
    <source>
        <tissue>Cervix carcinoma</tissue>
    </source>
</reference>
<reference key="19">
    <citation type="journal article" date="2008" name="Proc. Natl. Acad. Sci. U.S.A.">
        <title>Mass spectrometry reveals modularity and a complete subunit interaction map of the eukaryotic translation factor eIF3.</title>
        <authorList>
            <person name="Zhou M."/>
            <person name="Sandercock A.M."/>
            <person name="Fraser C.S."/>
            <person name="Ridlova G."/>
            <person name="Stephens E."/>
            <person name="Schenauer M.R."/>
            <person name="Yokoi-Fong T."/>
            <person name="Barsky D."/>
            <person name="Leary J.A."/>
            <person name="Hershey J.W.B."/>
            <person name="Doudna J.A."/>
            <person name="Robinson C.V."/>
        </authorList>
    </citation>
    <scope>IDENTIFICATION IN THE EIF-3 COMPLEX</scope>
    <scope>CHARACTERIZATION OF THE EIF-3 COMPLEX</scope>
    <scope>MASS SPECTROMETRY</scope>
</reference>
<reference key="20">
    <citation type="journal article" date="2009" name="Anal. Chem.">
        <title>Lys-N and trypsin cover complementary parts of the phosphoproteome in a refined SCX-based approach.</title>
        <authorList>
            <person name="Gauci S."/>
            <person name="Helbig A.O."/>
            <person name="Slijper M."/>
            <person name="Krijgsveld J."/>
            <person name="Heck A.J."/>
            <person name="Mohammed S."/>
        </authorList>
    </citation>
    <scope>ACETYLATION [LARGE SCALE ANALYSIS] AT ALA-2</scope>
    <scope>CLEAVAGE OF INITIATOR METHIONINE [LARGE SCALE ANALYSIS]</scope>
    <scope>IDENTIFICATION BY MASS SPECTROMETRY [LARGE SCALE ANALYSIS]</scope>
</reference>
<reference key="21">
    <citation type="journal article" date="2010" name="Sci. Signal.">
        <title>Quantitative phosphoproteomics reveals widespread full phosphorylation site occupancy during mitosis.</title>
        <authorList>
            <person name="Olsen J.V."/>
            <person name="Vermeulen M."/>
            <person name="Santamaria A."/>
            <person name="Kumar C."/>
            <person name="Miller M.L."/>
            <person name="Jensen L.J."/>
            <person name="Gnad F."/>
            <person name="Cox J."/>
            <person name="Jensen T.S."/>
            <person name="Nigg E.A."/>
            <person name="Brunak S."/>
            <person name="Mann M."/>
        </authorList>
    </citation>
    <scope>PHOSPHORYLATION [LARGE SCALE ANALYSIS] AT SER-217</scope>
    <scope>IDENTIFICATION BY MASS SPECTROMETRY [LARGE SCALE ANALYSIS]</scope>
    <source>
        <tissue>Cervix carcinoma</tissue>
    </source>
</reference>
<reference key="22">
    <citation type="journal article" date="2011" name="BMC Syst. Biol.">
        <title>Initial characterization of the human central proteome.</title>
        <authorList>
            <person name="Burkard T.R."/>
            <person name="Planyavsky M."/>
            <person name="Kaupe I."/>
            <person name="Breitwieser F.P."/>
            <person name="Buerckstuemmer T."/>
            <person name="Bennett K.L."/>
            <person name="Superti-Furga G."/>
            <person name="Colinge J."/>
        </authorList>
    </citation>
    <scope>IDENTIFICATION BY MASS SPECTROMETRY [LARGE SCALE ANALYSIS]</scope>
</reference>
<reference key="23">
    <citation type="journal article" date="2011" name="Sci. Signal.">
        <title>System-wide temporal characterization of the proteome and phosphoproteome of human embryonic stem cell differentiation.</title>
        <authorList>
            <person name="Rigbolt K.T."/>
            <person name="Prokhorova T.A."/>
            <person name="Akimov V."/>
            <person name="Henningsen J."/>
            <person name="Johansen P.T."/>
            <person name="Kratchmarova I."/>
            <person name="Kassem M."/>
            <person name="Mann M."/>
            <person name="Olsen J.V."/>
            <person name="Blagoev B."/>
        </authorList>
    </citation>
    <scope>PHOSPHORYLATION [LARGE SCALE ANALYSIS] AT SER-217</scope>
    <scope>IDENTIFICATION BY MASS SPECTROMETRY [LARGE SCALE ANALYSIS]</scope>
</reference>
<reference key="24">
    <citation type="journal article" date="2012" name="Mol. Cell. Proteomics">
        <title>Comparative large-scale characterisation of plant vs. mammal proteins reveals similar and idiosyncratic N-alpha acetylation features.</title>
        <authorList>
            <person name="Bienvenut W.V."/>
            <person name="Sumpton D."/>
            <person name="Martinez A."/>
            <person name="Lilla S."/>
            <person name="Espagne C."/>
            <person name="Meinnel T."/>
            <person name="Giglione C."/>
        </authorList>
    </citation>
    <scope>ACETYLATION [LARGE SCALE ANALYSIS] AT ALA-2</scope>
    <scope>CLEAVAGE OF INITIATOR METHIONINE [LARGE SCALE ANALYSIS]</scope>
    <scope>IDENTIFICATION BY MASS SPECTROMETRY [LARGE SCALE ANALYSIS]</scope>
</reference>
<reference key="25">
    <citation type="journal article" date="2012" name="Proc. Natl. Acad. Sci. U.S.A.">
        <title>N-terminal acetylome analyses and functional insights of the N-terminal acetyltransferase NatB.</title>
        <authorList>
            <person name="Van Damme P."/>
            <person name="Lasa M."/>
            <person name="Polevoda B."/>
            <person name="Gazquez C."/>
            <person name="Elosegui-Artola A."/>
            <person name="Kim D.S."/>
            <person name="De Juan-Pardo E."/>
            <person name="Demeyer K."/>
            <person name="Hole K."/>
            <person name="Larrea E."/>
            <person name="Timmerman E."/>
            <person name="Prieto J."/>
            <person name="Arnesen T."/>
            <person name="Sherman F."/>
            <person name="Gevaert K."/>
            <person name="Aldabe R."/>
        </authorList>
    </citation>
    <scope>ACETYLATION [LARGE SCALE ANALYSIS] AT ALA-2</scope>
    <scope>CLEAVAGE OF INITIATOR METHIONINE [LARGE SCALE ANALYSIS]</scope>
    <scope>IDENTIFICATION BY MASS SPECTROMETRY [LARGE SCALE ANALYSIS]</scope>
</reference>
<reference key="26">
    <citation type="journal article" date="2013" name="J. Proteome Res.">
        <title>Toward a comprehensive characterization of a human cancer cell phosphoproteome.</title>
        <authorList>
            <person name="Zhou H."/>
            <person name="Di Palma S."/>
            <person name="Preisinger C."/>
            <person name="Peng M."/>
            <person name="Polat A.N."/>
            <person name="Heck A.J."/>
            <person name="Mohammed S."/>
        </authorList>
    </citation>
    <scope>PHOSPHORYLATION [LARGE SCALE ANALYSIS] AT THR-28</scope>
    <scope>IDENTIFICATION BY MASS SPECTROMETRY [LARGE SCALE ANALYSIS]</scope>
    <source>
        <tissue>Erythroleukemia</tissue>
    </source>
</reference>
<reference key="27">
    <citation type="journal article" date="2015" name="Nature">
        <title>eIF3 targets cell-proliferation messenger RNAs for translational activation or repression.</title>
        <authorList>
            <person name="Lee A.S."/>
            <person name="Kranzusch P.J."/>
            <person name="Cate J.H."/>
        </authorList>
    </citation>
    <scope>FUNCTION</scope>
    <scope>IDENTIFICATION IN THE EIF-3 COMPLEX</scope>
</reference>
<reference key="28">
    <citation type="journal article" date="2015" name="Proteomics">
        <title>N-terminome analysis of the human mitochondrial proteome.</title>
        <authorList>
            <person name="Vaca Jacome A.S."/>
            <person name="Rabilloud T."/>
            <person name="Schaeffer-Reiss C."/>
            <person name="Rompais M."/>
            <person name="Ayoub D."/>
            <person name="Lane L."/>
            <person name="Bairoch A."/>
            <person name="Van Dorsselaer A."/>
            <person name="Carapito C."/>
        </authorList>
    </citation>
    <scope>IDENTIFICATION BY MASS SPECTROMETRY [LARGE SCALE ANALYSIS]</scope>
</reference>
<reference key="29">
    <citation type="journal article" date="2016" name="Nature">
        <title>eIF3d is an mRNA cap-binding protein that is required for specialized translation initiation.</title>
        <authorList>
            <person name="Lee A.S."/>
            <person name="Kranzusch P.J."/>
            <person name="Doudna J.A."/>
            <person name="Cate J.H."/>
        </authorList>
    </citation>
    <scope>FUNCTION</scope>
</reference>
<reference key="30">
    <citation type="journal article" date="2004" name="J. Biol. Chem.">
        <title>Crystal structure of human eIF3k, the first structure of eIF3 subunits.</title>
        <authorList>
            <person name="Wei Z."/>
            <person name="Zhang P."/>
            <person name="Zhou Z."/>
            <person name="Cheng Z."/>
            <person name="Wan M."/>
            <person name="Gong W."/>
        </authorList>
    </citation>
    <scope>X-RAY CRYSTALLOGRAPHY (2.1 ANGSTROMS)</scope>
</reference>